<reference key="1">
    <citation type="journal article" date="2000" name="Proc. Natl. Acad. Sci. U.S.A.">
        <title>Genome sequence of Halobacterium species NRC-1.</title>
        <authorList>
            <person name="Ng W.V."/>
            <person name="Kennedy S.P."/>
            <person name="Mahairas G.G."/>
            <person name="Berquist B."/>
            <person name="Pan M."/>
            <person name="Shukla H.D."/>
            <person name="Lasky S.R."/>
            <person name="Baliga N.S."/>
            <person name="Thorsson V."/>
            <person name="Sbrogna J."/>
            <person name="Swartzell S."/>
            <person name="Weir D."/>
            <person name="Hall J."/>
            <person name="Dahl T.A."/>
            <person name="Welti R."/>
            <person name="Goo Y.A."/>
            <person name="Leithauser B."/>
            <person name="Keller K."/>
            <person name="Cruz R."/>
            <person name="Danson M.J."/>
            <person name="Hough D.W."/>
            <person name="Maddocks D.G."/>
            <person name="Jablonski P.E."/>
            <person name="Krebs M.P."/>
            <person name="Angevine C.M."/>
            <person name="Dale H."/>
            <person name="Isenbarger T.A."/>
            <person name="Peck R.F."/>
            <person name="Pohlschroder M."/>
            <person name="Spudich J.L."/>
            <person name="Jung K.-H."/>
            <person name="Alam M."/>
            <person name="Freitas T."/>
            <person name="Hou S."/>
            <person name="Daniels C.J."/>
            <person name="Dennis P.P."/>
            <person name="Omer A.D."/>
            <person name="Ebhardt H."/>
            <person name="Lowe T.M."/>
            <person name="Liang P."/>
            <person name="Riley M."/>
            <person name="Hood L."/>
            <person name="DasSarma S."/>
        </authorList>
    </citation>
    <scope>NUCLEOTIDE SEQUENCE [LARGE SCALE GENOMIC DNA]</scope>
    <source>
        <strain>ATCC 700922 / JCM 11081 / NRC-1</strain>
    </source>
</reference>
<keyword id="KW-0028">Amino-acid biosynthesis</keyword>
<keyword id="KW-0963">Cytoplasm</keyword>
<keyword id="KW-0368">Histidine biosynthesis</keyword>
<keyword id="KW-0413">Isomerase</keyword>
<keyword id="KW-1185">Reference proteome</keyword>
<organism>
    <name type="scientific">Halobacterium salinarum (strain ATCC 700922 / JCM 11081 / NRC-1)</name>
    <name type="common">Halobacterium halobium</name>
    <dbReference type="NCBI Taxonomy" id="64091"/>
    <lineage>
        <taxon>Archaea</taxon>
        <taxon>Methanobacteriati</taxon>
        <taxon>Methanobacteriota</taxon>
        <taxon>Stenosarchaea group</taxon>
        <taxon>Halobacteria</taxon>
        <taxon>Halobacteriales</taxon>
        <taxon>Halobacteriaceae</taxon>
        <taxon>Halobacterium</taxon>
        <taxon>Halobacterium salinarum NRC-34001</taxon>
    </lineage>
</organism>
<sequence length="242" mass="24649">MTFESFTVLPAVDMQDGQVVQLVQGERGTERTYGDPVDAATDWVAAGAEALHLVDLDGAFEGARANATAVEDILDATDVSVQVGGGIRSAEDATALLDRGVDRVILGTAAIETPDIVGEIAAAYSDGVLVSLDAKDGEVVVEGWTEGTGMDPVAAAQRYADLGAAGILFTDVDVEGKQEGVRTDPVRDLVDSVDIPVIASGGVATVDDVRALEAAGAAGAVVGTALYEGNFTLADAQAAVED</sequence>
<protein>
    <recommendedName>
        <fullName>1-(5-phosphoribosyl)-5-[(5-phosphoribosylamino)methylideneamino] imidazole-4-carboxamide isomerase</fullName>
        <ecNumber>5.3.1.16</ecNumber>
    </recommendedName>
    <alternativeName>
        <fullName>Phosphoribosylformimino-5-aminoimidazole carboxamide ribotide isomerase</fullName>
    </alternativeName>
</protein>
<dbReference type="EC" id="5.3.1.16"/>
<dbReference type="EMBL" id="AE004437">
    <property type="protein sequence ID" value="AAG20407.1"/>
    <property type="molecule type" value="Genomic_DNA"/>
</dbReference>
<dbReference type="PIR" id="C84380">
    <property type="entry name" value="C84380"/>
</dbReference>
<dbReference type="RefSeq" id="WP_010903708.1">
    <property type="nucleotide sequence ID" value="NC_002607.1"/>
</dbReference>
<dbReference type="SMR" id="Q9HN14"/>
<dbReference type="FunCoup" id="Q9HN14">
    <property type="interactions" value="94"/>
</dbReference>
<dbReference type="STRING" id="64091.VNG_2294G"/>
<dbReference type="PaxDb" id="64091-VNG_2294G"/>
<dbReference type="GeneID" id="68694839"/>
<dbReference type="KEGG" id="hal:VNG_2294G"/>
<dbReference type="PATRIC" id="fig|64091.14.peg.1770"/>
<dbReference type="HOGENOM" id="CLU_048577_1_1_2"/>
<dbReference type="InParanoid" id="Q9HN14"/>
<dbReference type="OrthoDB" id="52866at2157"/>
<dbReference type="PhylomeDB" id="Q9HN14"/>
<dbReference type="UniPathway" id="UPA00031">
    <property type="reaction ID" value="UER00009"/>
</dbReference>
<dbReference type="Proteomes" id="UP000000554">
    <property type="component" value="Chromosome"/>
</dbReference>
<dbReference type="GO" id="GO:0005737">
    <property type="term" value="C:cytoplasm"/>
    <property type="evidence" value="ECO:0000318"/>
    <property type="project" value="GO_Central"/>
</dbReference>
<dbReference type="GO" id="GO:0003949">
    <property type="term" value="F:1-(5-phosphoribosyl)-5-[(5-phosphoribosylamino)methylideneamino]imidazole-4-carboxamide isomerase activity"/>
    <property type="evidence" value="ECO:0000318"/>
    <property type="project" value="GO_Central"/>
</dbReference>
<dbReference type="GO" id="GO:0016627">
    <property type="term" value="F:oxidoreductase activity, acting on the CH-CH group of donors"/>
    <property type="evidence" value="ECO:0007669"/>
    <property type="project" value="InterPro"/>
</dbReference>
<dbReference type="GO" id="GO:0006207">
    <property type="term" value="P:'de novo' pyrimidine nucleobase biosynthetic process"/>
    <property type="evidence" value="ECO:0007669"/>
    <property type="project" value="InterPro"/>
</dbReference>
<dbReference type="GO" id="GO:0000105">
    <property type="term" value="P:L-histidine biosynthetic process"/>
    <property type="evidence" value="ECO:0000318"/>
    <property type="project" value="GO_Central"/>
</dbReference>
<dbReference type="CDD" id="cd04732">
    <property type="entry name" value="HisA"/>
    <property type="match status" value="1"/>
</dbReference>
<dbReference type="FunFam" id="3.20.20.70:FF:000009">
    <property type="entry name" value="1-(5-phosphoribosyl)-5-[(5-phosphoribosylamino)methylideneamino] imidazole-4-carboxamide isomerase"/>
    <property type="match status" value="1"/>
</dbReference>
<dbReference type="Gene3D" id="3.20.20.70">
    <property type="entry name" value="Aldolase class I"/>
    <property type="match status" value="1"/>
</dbReference>
<dbReference type="HAMAP" id="MF_01014">
    <property type="entry name" value="HisA"/>
    <property type="match status" value="1"/>
</dbReference>
<dbReference type="InterPro" id="IPR013785">
    <property type="entry name" value="Aldolase_TIM"/>
</dbReference>
<dbReference type="InterPro" id="IPR001295">
    <property type="entry name" value="Dihydroorotate_DH_CS"/>
</dbReference>
<dbReference type="InterPro" id="IPR006062">
    <property type="entry name" value="His_biosynth"/>
</dbReference>
<dbReference type="InterPro" id="IPR006063">
    <property type="entry name" value="HisA_bact_arch"/>
</dbReference>
<dbReference type="InterPro" id="IPR044524">
    <property type="entry name" value="Isoase_HisA-like"/>
</dbReference>
<dbReference type="InterPro" id="IPR023016">
    <property type="entry name" value="Isoase_HisA-like_bact"/>
</dbReference>
<dbReference type="InterPro" id="IPR011060">
    <property type="entry name" value="RibuloseP-bd_barrel"/>
</dbReference>
<dbReference type="NCBIfam" id="TIGR00007">
    <property type="entry name" value="1-(5-phosphoribosyl)-5-[(5-phosphoribosylamino)methylideneamino]imidazole-4-carboxamide isomerase"/>
    <property type="match status" value="1"/>
</dbReference>
<dbReference type="NCBIfam" id="NF010112">
    <property type="entry name" value="PRK13585.1"/>
    <property type="match status" value="1"/>
</dbReference>
<dbReference type="PANTHER" id="PTHR43090">
    <property type="entry name" value="1-(5-PHOSPHORIBOSYL)-5-[(5-PHOSPHORIBOSYLAMINO)METHYLIDENEAMINO] IMIDAZOLE-4-CARBOXAMIDE ISOMERASE"/>
    <property type="match status" value="1"/>
</dbReference>
<dbReference type="PANTHER" id="PTHR43090:SF7">
    <property type="entry name" value="1-(5-PHOSPHORIBOSYL)-5-[(5-PHOSPHORIBOSYLAMINO)METHYLIDENEAMINO] IMIDAZOLE-4-CARBOXAMIDE ISOMERASE"/>
    <property type="match status" value="1"/>
</dbReference>
<dbReference type="Pfam" id="PF00977">
    <property type="entry name" value="His_biosynth"/>
    <property type="match status" value="1"/>
</dbReference>
<dbReference type="SUPFAM" id="SSF51366">
    <property type="entry name" value="Ribulose-phoshate binding barrel"/>
    <property type="match status" value="1"/>
</dbReference>
<comment type="catalytic activity">
    <reaction>
        <text>1-(5-phospho-beta-D-ribosyl)-5-[(5-phospho-beta-D-ribosylamino)methylideneamino]imidazole-4-carboxamide = 5-[(5-phospho-1-deoxy-D-ribulos-1-ylimino)methylamino]-1-(5-phospho-beta-D-ribosyl)imidazole-4-carboxamide</text>
        <dbReference type="Rhea" id="RHEA:15469"/>
        <dbReference type="ChEBI" id="CHEBI:58435"/>
        <dbReference type="ChEBI" id="CHEBI:58525"/>
        <dbReference type="EC" id="5.3.1.16"/>
    </reaction>
</comment>
<comment type="pathway">
    <text>Amino-acid biosynthesis; L-histidine biosynthesis; L-histidine from 5-phospho-alpha-D-ribose 1-diphosphate: step 4/9.</text>
</comment>
<comment type="subcellular location">
    <subcellularLocation>
        <location evidence="1">Cytoplasm</location>
    </subcellularLocation>
</comment>
<comment type="similarity">
    <text evidence="2">Belongs to the HisA/HisF family.</text>
</comment>
<gene>
    <name type="primary">hisA</name>
    <name type="ordered locus">VNG_2294G</name>
</gene>
<name>HIS4_HALSA</name>
<feature type="chain" id="PRO_0000142090" description="1-(5-phosphoribosyl)-5-[(5-phosphoribosylamino)methylideneamino] imidazole-4-carboxamide isomerase">
    <location>
        <begin position="1"/>
        <end position="242"/>
    </location>
</feature>
<feature type="active site" description="Proton acceptor" evidence="1">
    <location>
        <position position="13"/>
    </location>
</feature>
<feature type="active site" description="Proton donor" evidence="1">
    <location>
        <position position="133"/>
    </location>
</feature>
<evidence type="ECO:0000250" key="1"/>
<evidence type="ECO:0000305" key="2"/>
<proteinExistence type="inferred from homology"/>
<accession>Q9HN14</accession>